<reference key="1">
    <citation type="patent" date="2001-03-15" number="WO0118050">
        <title>T2r taste receptor family.</title>
        <authorList>
            <person name="Zuker C.S."/>
            <person name="Adler J.E."/>
            <person name="Ryba N."/>
            <person name="Mueller K."/>
            <person name="Hoon M."/>
        </authorList>
    </citation>
    <scope>NUCLEOTIDE SEQUENCE [GENOMIC DNA]</scope>
</reference>
<name>T2R33_HUMAN</name>
<comment type="function">
    <text evidence="3">Putative taste receptor which may play a role in the perception of bitterness.</text>
</comment>
<comment type="subcellular location">
    <subcellularLocation>
        <location evidence="1">Membrane</location>
        <topology evidence="1">Multi-pass membrane protein</topology>
    </subcellularLocation>
</comment>
<comment type="similarity">
    <text evidence="3">Belongs to the G-protein coupled receptor T2R family.</text>
</comment>
<comment type="caution">
    <text evidence="3">Product of a dubious gene prediction. Zuker et al. identified this gene on chromosome 12. However, it is not currently present on the reference genome assembly (GRCh38/hg38).</text>
</comment>
<evidence type="ECO:0000255" key="1"/>
<evidence type="ECO:0000303" key="2">
    <source ref="1"/>
</evidence>
<evidence type="ECO:0000305" key="3"/>
<evidence type="ECO:0000312" key="4">
    <source>
        <dbReference type="HGNC" id="HGNC:19114"/>
    </source>
</evidence>
<dbReference type="EMBL" id="AX097751">
    <property type="status" value="NOT_ANNOTATED_CDS"/>
    <property type="molecule type" value="Unassigned_DNA"/>
</dbReference>
<dbReference type="SMR" id="P0DSN6"/>
<dbReference type="GlyCosmos" id="P0DSN6">
    <property type="glycosylation" value="2 sites, No reported glycans"/>
</dbReference>
<dbReference type="GlyGen" id="P0DSN6">
    <property type="glycosylation" value="2 sites"/>
</dbReference>
<dbReference type="MassIVE" id="P0DSN6"/>
<dbReference type="AGR" id="HGNC:19114"/>
<dbReference type="GeneCards" id="TAS2R33"/>
<dbReference type="HGNC" id="HGNC:19114">
    <property type="gene designation" value="TAS2R33"/>
</dbReference>
<dbReference type="neXtProt" id="NX_P0DSN6"/>
<dbReference type="InParanoid" id="P0DSN6"/>
<dbReference type="Proteomes" id="UP000005640">
    <property type="component" value="Unplaced"/>
</dbReference>
<dbReference type="GO" id="GO:0016020">
    <property type="term" value="C:membrane"/>
    <property type="evidence" value="ECO:0000318"/>
    <property type="project" value="GO_Central"/>
</dbReference>
<dbReference type="GO" id="GO:0005886">
    <property type="term" value="C:plasma membrane"/>
    <property type="evidence" value="ECO:0007669"/>
    <property type="project" value="UniProtKB-ARBA"/>
</dbReference>
<dbReference type="GO" id="GO:0033038">
    <property type="term" value="F:bitter taste receptor activity"/>
    <property type="evidence" value="ECO:0007669"/>
    <property type="project" value="InterPro"/>
</dbReference>
<dbReference type="GO" id="GO:0004930">
    <property type="term" value="F:G protein-coupled receptor activity"/>
    <property type="evidence" value="ECO:0007669"/>
    <property type="project" value="UniProtKB-KW"/>
</dbReference>
<dbReference type="CDD" id="cd15027">
    <property type="entry name" value="7tm_TAS2R43-like"/>
    <property type="match status" value="1"/>
</dbReference>
<dbReference type="FunFam" id="1.20.1070.10:FF:000042">
    <property type="entry name" value="Taste receptor type 2 member 7"/>
    <property type="match status" value="1"/>
</dbReference>
<dbReference type="Gene3D" id="1.20.1070.10">
    <property type="entry name" value="Rhodopsin 7-helix transmembrane proteins"/>
    <property type="match status" value="1"/>
</dbReference>
<dbReference type="InterPro" id="IPR007960">
    <property type="entry name" value="TAS2R"/>
</dbReference>
<dbReference type="PANTHER" id="PTHR11394">
    <property type="entry name" value="TASTE RECEPTOR TYPE 2"/>
    <property type="match status" value="1"/>
</dbReference>
<dbReference type="PANTHER" id="PTHR11394:SF139">
    <property type="entry name" value="TASTE RECEPTOR TYPE 2 MEMBER 19-RELATED"/>
    <property type="match status" value="1"/>
</dbReference>
<dbReference type="Pfam" id="PF05296">
    <property type="entry name" value="TAS2R"/>
    <property type="match status" value="1"/>
</dbReference>
<dbReference type="SUPFAM" id="SSF81321">
    <property type="entry name" value="Family A G protein-coupled receptor-like"/>
    <property type="match status" value="1"/>
</dbReference>
<sequence length="309" mass="35400">MVYFLPIIFSILVVFAFVLGNFSNGFIALVNVIDWVKRQKISSADQILTALVVSRVGLLWVILLHWYANVFNSALYSLEVRIVASNISAVINHFSIWLAASLSIFYLLKIANFSNLIFLHLKKRIKSVVLVILLGPLVFLICNLAVITMDERVWTKEYEGNVTWKIKLRNAIHLSSLTVTTLANLIPFTLSLICFLLLICSLCKHLKKMQLHSKGSQDPSTKVHIKALQTVISFLMLCAIYFLSIMISVWNLRSLENKPVFMFCKAIRFSYPSIHPFILIWGNKKLKQTFLSVFWQVRYWVKGEKPSSP</sequence>
<keyword id="KW-0297">G-protein coupled receptor</keyword>
<keyword id="KW-0325">Glycoprotein</keyword>
<keyword id="KW-0472">Membrane</keyword>
<keyword id="KW-0675">Receptor</keyword>
<keyword id="KW-1185">Reference proteome</keyword>
<keyword id="KW-0716">Sensory transduction</keyword>
<keyword id="KW-0919">Taste</keyword>
<keyword id="KW-0807">Transducer</keyword>
<keyword id="KW-0812">Transmembrane</keyword>
<keyword id="KW-1133">Transmembrane helix</keyword>
<feature type="chain" id="PRO_0000450481" description="Putative taste receptor type 2 member 33">
    <location>
        <begin position="1"/>
        <end position="309"/>
    </location>
</feature>
<feature type="topological domain" description="Extracellular" evidence="3">
    <location>
        <position position="1"/>
    </location>
</feature>
<feature type="transmembrane region" description="Helical" evidence="1">
    <location>
        <begin position="2"/>
        <end position="22"/>
    </location>
</feature>
<feature type="topological domain" description="Cytoplasmic" evidence="3">
    <location>
        <begin position="23"/>
        <end position="46"/>
    </location>
</feature>
<feature type="transmembrane region" description="Helical" evidence="1">
    <location>
        <begin position="47"/>
        <end position="67"/>
    </location>
</feature>
<feature type="topological domain" description="Extracellular" evidence="3">
    <location>
        <begin position="68"/>
        <end position="86"/>
    </location>
</feature>
<feature type="transmembrane region" description="Helical" evidence="1">
    <location>
        <begin position="87"/>
        <end position="107"/>
    </location>
</feature>
<feature type="topological domain" description="Cytoplasmic" evidence="3">
    <location>
        <begin position="108"/>
        <end position="127"/>
    </location>
</feature>
<feature type="transmembrane region" description="Helical" evidence="1">
    <location>
        <begin position="128"/>
        <end position="148"/>
    </location>
</feature>
<feature type="topological domain" description="Extracellular" evidence="3">
    <location>
        <begin position="149"/>
        <end position="181"/>
    </location>
</feature>
<feature type="transmembrane region" description="Helical" evidence="1">
    <location>
        <begin position="182"/>
        <end position="202"/>
    </location>
</feature>
<feature type="topological domain" description="Cytoplasmic" evidence="3">
    <location>
        <begin position="203"/>
        <end position="229"/>
    </location>
</feature>
<feature type="transmembrane region" description="Helical" evidence="1">
    <location>
        <begin position="230"/>
        <end position="250"/>
    </location>
</feature>
<feature type="topological domain" description="Extracellular" evidence="3">
    <location>
        <begin position="251"/>
        <end position="259"/>
    </location>
</feature>
<feature type="transmembrane region" description="Helical" evidence="1">
    <location>
        <begin position="260"/>
        <end position="280"/>
    </location>
</feature>
<feature type="topological domain" description="Cytoplasmic" evidence="3">
    <location>
        <begin position="281"/>
        <end position="309"/>
    </location>
</feature>
<feature type="glycosylation site" description="N-linked (GlcNAc...) asparagine" evidence="1">
    <location>
        <position position="86"/>
    </location>
</feature>
<feature type="glycosylation site" description="N-linked (GlcNAc...) asparagine" evidence="1">
    <location>
        <position position="161"/>
    </location>
</feature>
<proteinExistence type="uncertain"/>
<gene>
    <name evidence="4" type="primary">TAS2R33</name>
</gene>
<organism>
    <name type="scientific">Homo sapiens</name>
    <name type="common">Human</name>
    <dbReference type="NCBI Taxonomy" id="9606"/>
    <lineage>
        <taxon>Eukaryota</taxon>
        <taxon>Metazoa</taxon>
        <taxon>Chordata</taxon>
        <taxon>Craniata</taxon>
        <taxon>Vertebrata</taxon>
        <taxon>Euteleostomi</taxon>
        <taxon>Mammalia</taxon>
        <taxon>Eutheria</taxon>
        <taxon>Euarchontoglires</taxon>
        <taxon>Primates</taxon>
        <taxon>Haplorrhini</taxon>
        <taxon>Catarrhini</taxon>
        <taxon>Hominidae</taxon>
        <taxon>Homo</taxon>
    </lineage>
</organism>
<protein>
    <recommendedName>
        <fullName evidence="3">Putative taste receptor type 2 member 33</fullName>
        <shortName evidence="2">T2R33</shortName>
        <shortName evidence="2">hGR33</shortName>
    </recommendedName>
</protein>
<accession>P0DSN6</accession>